<evidence type="ECO:0000255" key="1"/>
<evidence type="ECO:0000305" key="2"/>
<comment type="subcellular location">
    <subcellularLocation>
        <location evidence="2">Host membrane</location>
        <topology evidence="2">Single-pass membrane protein</topology>
    </subcellularLocation>
</comment>
<proteinExistence type="predicted"/>
<organismHost>
    <name type="scientific">Dryophytes versicolor</name>
    <name type="common">chameleon treefrog</name>
    <dbReference type="NCBI Taxonomy" id="30343"/>
</organismHost>
<organismHost>
    <name type="scientific">Lithobates pipiens</name>
    <name type="common">Northern leopard frog</name>
    <name type="synonym">Rana pipiens</name>
    <dbReference type="NCBI Taxonomy" id="8404"/>
</organismHost>
<organismHost>
    <name type="scientific">Lithobates sylvaticus</name>
    <name type="common">Wood frog</name>
    <name type="synonym">Rana sylvatica</name>
    <dbReference type="NCBI Taxonomy" id="45438"/>
</organismHost>
<organismHost>
    <name type="scientific">Notophthalmus viridescens</name>
    <name type="common">Eastern newt</name>
    <name type="synonym">Triturus viridescens</name>
    <dbReference type="NCBI Taxonomy" id="8316"/>
</organismHost>
<name>011R_FRG3G</name>
<gene>
    <name type="ORF">FV3-011R</name>
</gene>
<accession>Q6GZW4</accession>
<protein>
    <recommendedName>
        <fullName>Uncharacterized protein 011R</fullName>
    </recommendedName>
</protein>
<sequence length="70" mass="7872">MTSVKTIAMLAMLVIVAALIYMGYRTFTSMQSKLNELESRVNAPQLRPPVMSPIVPLNFIESEDLDKELD</sequence>
<feature type="chain" id="PRO_0000410547" description="Uncharacterized protein 011R">
    <location>
        <begin position="1"/>
        <end position="70"/>
    </location>
</feature>
<feature type="transmembrane region" description="Helical" evidence="1">
    <location>
        <begin position="4"/>
        <end position="24"/>
    </location>
</feature>
<reference key="1">
    <citation type="journal article" date="2004" name="Virology">
        <title>Comparative genomic analyses of frog virus 3, type species of the genus Ranavirus (family Iridoviridae).</title>
        <authorList>
            <person name="Tan W.G."/>
            <person name="Barkman T.J."/>
            <person name="Gregory Chinchar V."/>
            <person name="Essani K."/>
        </authorList>
    </citation>
    <scope>NUCLEOTIDE SEQUENCE [LARGE SCALE GENOMIC DNA]</scope>
</reference>
<reference key="2">
    <citation type="submission" date="2004-02" db="EMBL/GenBank/DDBJ databases">
        <authorList>
            <person name="Tan W.G.H."/>
            <person name="Barkman T.J."/>
            <person name="Chinchar V.G."/>
            <person name="Essani K."/>
        </authorList>
    </citation>
    <scope>NUCLEOTIDE SEQUENCE [LARGE SCALE GENOMIC DNA]</scope>
</reference>
<organism>
    <name type="scientific">Frog virus 3 (isolate Goorha)</name>
    <name type="common">FV-3</name>
    <dbReference type="NCBI Taxonomy" id="654924"/>
    <lineage>
        <taxon>Viruses</taxon>
        <taxon>Varidnaviria</taxon>
        <taxon>Bamfordvirae</taxon>
        <taxon>Nucleocytoviricota</taxon>
        <taxon>Megaviricetes</taxon>
        <taxon>Pimascovirales</taxon>
        <taxon>Iridoviridae</taxon>
        <taxon>Alphairidovirinae</taxon>
        <taxon>Ranavirus</taxon>
        <taxon>Frog virus 3</taxon>
    </lineage>
</organism>
<dbReference type="EMBL" id="AY548484">
    <property type="protein sequence ID" value="AAT09670.1"/>
    <property type="molecule type" value="Genomic_DNA"/>
</dbReference>
<dbReference type="RefSeq" id="YP_031589.1">
    <property type="nucleotide sequence ID" value="NC_005946.1"/>
</dbReference>
<dbReference type="SMR" id="Q6GZW4"/>
<dbReference type="KEGG" id="vg:2947783"/>
<dbReference type="Proteomes" id="UP000008770">
    <property type="component" value="Segment"/>
</dbReference>
<dbReference type="GO" id="GO:0033644">
    <property type="term" value="C:host cell membrane"/>
    <property type="evidence" value="ECO:0007669"/>
    <property type="project" value="UniProtKB-SubCell"/>
</dbReference>
<dbReference type="GO" id="GO:0016020">
    <property type="term" value="C:membrane"/>
    <property type="evidence" value="ECO:0007669"/>
    <property type="project" value="UniProtKB-KW"/>
</dbReference>
<keyword id="KW-1043">Host membrane</keyword>
<keyword id="KW-0472">Membrane</keyword>
<keyword id="KW-1185">Reference proteome</keyword>
<keyword id="KW-0812">Transmembrane</keyword>
<keyword id="KW-1133">Transmembrane helix</keyword>